<dbReference type="EMBL" id="BA000039">
    <property type="protein sequence ID" value="BAC10015.1"/>
    <property type="molecule type" value="Genomic_DNA"/>
</dbReference>
<dbReference type="RefSeq" id="NP_683253.1">
    <property type="nucleotide sequence ID" value="NC_004113.1"/>
</dbReference>
<dbReference type="RefSeq" id="WP_011058295.1">
    <property type="nucleotide sequence ID" value="NC_004113.1"/>
</dbReference>
<dbReference type="PDB" id="2Y6X">
    <property type="method" value="X-ray"/>
    <property type="resolution" value="1.60 A"/>
    <property type="chains" value="A=24-134"/>
</dbReference>
<dbReference type="PDB" id="7NHP">
    <property type="method" value="EM"/>
    <property type="resolution" value="2.72 A"/>
    <property type="chains" value="1=1-134"/>
</dbReference>
<dbReference type="PDBsum" id="2Y6X"/>
<dbReference type="PDBsum" id="7NHP"/>
<dbReference type="EMDB" id="EMD-12336"/>
<dbReference type="SMR" id="Q8DG60"/>
<dbReference type="STRING" id="197221.gene:10749085"/>
<dbReference type="EnsemblBacteria" id="BAC10015">
    <property type="protein sequence ID" value="BAC10015"/>
    <property type="gene ID" value="BAC10015"/>
</dbReference>
<dbReference type="KEGG" id="tel:tll2464"/>
<dbReference type="PATRIC" id="fig|197221.4.peg.2588"/>
<dbReference type="eggNOG" id="ENOG5031CPI">
    <property type="taxonomic scope" value="Bacteria"/>
</dbReference>
<dbReference type="BRENDA" id="1.10.3.9">
    <property type="organism ID" value="7763"/>
</dbReference>
<dbReference type="EvolutionaryTrace" id="Q8DG60"/>
<dbReference type="Proteomes" id="UP000000440">
    <property type="component" value="Chromosome"/>
</dbReference>
<dbReference type="GO" id="GO:0009523">
    <property type="term" value="C:photosystem II"/>
    <property type="evidence" value="ECO:0000314"/>
    <property type="project" value="UniProtKB"/>
</dbReference>
<dbReference type="GO" id="GO:0031676">
    <property type="term" value="C:plasma membrane-derived thylakoid membrane"/>
    <property type="evidence" value="ECO:0007669"/>
    <property type="project" value="UniProtKB-SubCell"/>
</dbReference>
<dbReference type="GO" id="GO:0009579">
    <property type="term" value="C:thylakoid"/>
    <property type="evidence" value="ECO:0000314"/>
    <property type="project" value="UniProtKB"/>
</dbReference>
<dbReference type="GO" id="GO:0031977">
    <property type="term" value="C:thylakoid lumen"/>
    <property type="evidence" value="ECO:0007669"/>
    <property type="project" value="UniProtKB-UniRule"/>
</dbReference>
<dbReference type="GO" id="GO:0010207">
    <property type="term" value="P:photosystem II assembly"/>
    <property type="evidence" value="ECO:0000314"/>
    <property type="project" value="UniProtKB"/>
</dbReference>
<dbReference type="GO" id="GO:0010206">
    <property type="term" value="P:photosystem II repair"/>
    <property type="evidence" value="ECO:0000314"/>
    <property type="project" value="UniProtKB"/>
</dbReference>
<dbReference type="Gene3D" id="1.20.58.810">
    <property type="entry name" value="Photosystem II Pbs27"/>
    <property type="match status" value="1"/>
</dbReference>
<dbReference type="HAMAP" id="MF_01481">
    <property type="entry name" value="PSII_Psb27"/>
    <property type="match status" value="1"/>
</dbReference>
<dbReference type="InterPro" id="IPR025585">
    <property type="entry name" value="PSII_Psb27"/>
</dbReference>
<dbReference type="InterPro" id="IPR017488">
    <property type="entry name" value="PSII_Psb27_cyano_bac"/>
</dbReference>
<dbReference type="InterPro" id="IPR038450">
    <property type="entry name" value="PSII_Psb27_sf"/>
</dbReference>
<dbReference type="NCBIfam" id="TIGR03044">
    <property type="entry name" value="PS_II_psb27"/>
    <property type="match status" value="1"/>
</dbReference>
<dbReference type="PANTHER" id="PTHR34041">
    <property type="entry name" value="PHOTOSYSTEM II REPAIR PROTEIN PSB27-H1, CHLOROPLASTIC"/>
    <property type="match status" value="1"/>
</dbReference>
<dbReference type="PANTHER" id="PTHR34041:SF1">
    <property type="entry name" value="PHOTOSYSTEM II REPAIR PROTEIN PSB27-H1, CHLOROPLASTIC"/>
    <property type="match status" value="1"/>
</dbReference>
<dbReference type="Pfam" id="PF13326">
    <property type="entry name" value="PSII_Pbs27"/>
    <property type="match status" value="1"/>
</dbReference>
<dbReference type="PROSITE" id="PS51257">
    <property type="entry name" value="PROKAR_LIPOPROTEIN"/>
    <property type="match status" value="1"/>
</dbReference>
<comment type="function">
    <text evidence="2 3">Plays a role in the repair and/or biogenesis of the calcium-manganese-oxide cluster on the lumenal face of the thylakoid membrane. Its presence in a photosystem II (PSII) preparation prevents binding of other extrinsic subunits PsbO, PsbU and PsbV, and thus assembly of calcium-manganese-oxide cluster. Psb27-containing complexes lack oxygen evolving activity and an oxidizable calcium-manganese-oxide cluster, but have a normal reaction center.</text>
</comment>
<comment type="subunit">
    <text evidence="2 4">Part of a photosystem II (PSII) assembly intermediate complex PSII-I; crystallized from a strain deleted of psbJ, it forms monomeric PSII before addition of the oxygen evolving complex. PSII-I includes 3 assembly factors not found in mature PSII (Psb27, Psb28 and Psb34). Binds to the lumenal side of PSII, adjacent to the CP43 (psbC) subunit (PubMed:17114356, PubMed:33846594).</text>
</comment>
<comment type="subcellular location">
    <subcellularLocation>
        <location evidence="4">Cellular thylakoid membrane</location>
        <topology evidence="6">Lipid-anchor</topology>
        <orientation evidence="4">Lumenal side</orientation>
    </subcellularLocation>
    <text evidence="4">Associated with PSII on the lumenal side of the thylakoid membrane, its binding site probably overlaps that of PsbO (PubMed:33846594).</text>
</comment>
<comment type="mass spectrometry" mass="13518.1" method="MALDI" evidence="2">
    <text>Isolated from PSII.</text>
</comment>
<comment type="mass spectrometry" mass="13252.3" method="MALDI" evidence="2">
    <text>After treatment with Lipolase for 5 minutes.</text>
</comment>
<comment type="mass spectrometry" mass="13013.2" method="MALDI" evidence="2">
    <text>After treatment with Lipolase for 30 minutes.</text>
</comment>
<comment type="similarity">
    <text evidence="1">Belongs to the Psb27 family.</text>
</comment>
<proteinExistence type="evidence at protein level"/>
<protein>
    <recommendedName>
        <fullName evidence="1 5">Photosystem II assembly factor lipoprotein Psb27</fullName>
    </recommendedName>
    <alternativeName>
        <fullName evidence="1">Photosystem II 11 kDa protein</fullName>
    </alternativeName>
</protein>
<evidence type="ECO:0000255" key="1">
    <source>
        <dbReference type="HAMAP-Rule" id="MF_01481"/>
    </source>
</evidence>
<evidence type="ECO:0000269" key="2">
    <source>
    </source>
</evidence>
<evidence type="ECO:0000269" key="3">
    <source>
    </source>
</evidence>
<evidence type="ECO:0000269" key="4">
    <source>
    </source>
</evidence>
<evidence type="ECO:0000303" key="5">
    <source>
    </source>
</evidence>
<evidence type="ECO:0000305" key="6">
    <source>
    </source>
</evidence>
<evidence type="ECO:0007744" key="7">
    <source>
        <dbReference type="PDB" id="7NHP"/>
    </source>
</evidence>
<evidence type="ECO:0007829" key="8">
    <source>
        <dbReference type="PDB" id="2Y6X"/>
    </source>
</evidence>
<evidence type="ECO:0007829" key="9">
    <source>
        <dbReference type="PDB" id="7NHP"/>
    </source>
</evidence>
<organism>
    <name type="scientific">Thermosynechococcus vestitus (strain NIES-2133 / IAM M-273 / BP-1)</name>
    <dbReference type="NCBI Taxonomy" id="197221"/>
    <lineage>
        <taxon>Bacteria</taxon>
        <taxon>Bacillati</taxon>
        <taxon>Cyanobacteriota</taxon>
        <taxon>Cyanophyceae</taxon>
        <taxon>Acaryochloridales</taxon>
        <taxon>Thermosynechococcaceae</taxon>
        <taxon>Thermosynechococcus</taxon>
    </lineage>
</organism>
<name>PSB27_THEVB</name>
<sequence length="134" mass="15100">MKRFWAMVCALFLSVSLLLTSCANVPTGLTGNFREDTLALISSLREAIALPENDPNKKAAQAEARKKLNDFFALYRRDDSLRSLSSFMTMQTALNSLAGHYSSYPNRPLPEKLKARLEQEFKQVELALDREAKS</sequence>
<keyword id="KW-0002">3D-structure</keyword>
<keyword id="KW-0449">Lipoprotein</keyword>
<keyword id="KW-0472">Membrane</keyword>
<keyword id="KW-0564">Palmitate</keyword>
<keyword id="KW-1185">Reference proteome</keyword>
<keyword id="KW-0732">Signal</keyword>
<keyword id="KW-0793">Thylakoid</keyword>
<accession>Q8DG60</accession>
<feature type="signal peptide" evidence="1 2">
    <location>
        <begin position="1"/>
        <end position="21"/>
    </location>
</feature>
<feature type="chain" id="PRO_0000422925" description="Photosystem II assembly factor lipoprotein Psb27">
    <location>
        <begin position="22"/>
        <end position="134"/>
    </location>
</feature>
<feature type="lipid moiety-binding region" description="N-palmitoyl cysteine" evidence="1 2">
    <location>
        <position position="22"/>
    </location>
</feature>
<feature type="lipid moiety-binding region" description="S-diacylglycerol cysteine" evidence="1 2">
    <location>
        <position position="22"/>
    </location>
</feature>
<feature type="strand" evidence="9">
    <location>
        <begin position="26"/>
        <end position="28"/>
    </location>
</feature>
<feature type="helix" evidence="8">
    <location>
        <begin position="33"/>
        <end position="49"/>
    </location>
</feature>
<feature type="strand" evidence="9">
    <location>
        <begin position="52"/>
        <end position="54"/>
    </location>
</feature>
<feature type="helix" evidence="8">
    <location>
        <begin position="57"/>
        <end position="75"/>
    </location>
</feature>
<feature type="helix" evidence="8">
    <location>
        <begin position="79"/>
        <end position="82"/>
    </location>
</feature>
<feature type="helix" evidence="8">
    <location>
        <begin position="85"/>
        <end position="103"/>
    </location>
</feature>
<feature type="helix" evidence="8">
    <location>
        <begin position="111"/>
        <end position="133"/>
    </location>
</feature>
<reference key="1">
    <citation type="journal article" date="2002" name="DNA Res.">
        <title>Complete genome structure of the thermophilic cyanobacterium Thermosynechococcus elongatus BP-1.</title>
        <authorList>
            <person name="Nakamura Y."/>
            <person name="Kaneko T."/>
            <person name="Sato S."/>
            <person name="Ikeuchi M."/>
            <person name="Katoh H."/>
            <person name="Sasamoto S."/>
            <person name="Watanabe A."/>
            <person name="Iriguchi M."/>
            <person name="Kawashima K."/>
            <person name="Kimura T."/>
            <person name="Kishida Y."/>
            <person name="Kiyokawa C."/>
            <person name="Kohara M."/>
            <person name="Matsumoto M."/>
            <person name="Matsuno A."/>
            <person name="Nakazaki N."/>
            <person name="Shimpo S."/>
            <person name="Sugimoto M."/>
            <person name="Takeuchi C."/>
            <person name="Yamada M."/>
            <person name="Tabata S."/>
        </authorList>
    </citation>
    <scope>NUCLEOTIDE SEQUENCE [LARGE SCALE GENOMIC DNA]</scope>
    <source>
        <strain>NIES-2133 / IAM M-273 / BP-1</strain>
    </source>
</reference>
<reference key="2">
    <citation type="journal article" date="2006" name="Plant Cell">
        <title>Psb27, a cyanobacterial lipoprotein, is involved in the repair cycle of photosystem II.</title>
        <authorList>
            <person name="Nowaczyk M.M."/>
            <person name="Hebeler R."/>
            <person name="Schlodder E."/>
            <person name="Meyer H.E."/>
            <person name="Warscheid B."/>
            <person name="Rogner M."/>
        </authorList>
    </citation>
    <scope>FUNCTION</scope>
    <scope>CHARACTERIZATION AS A LIPOPROTEIN</scope>
    <scope>PALMITOYLATION AT CYS-22</scope>
    <scope>DIACYLGLYCEROL AT CYS-22</scope>
    <scope>SUBUNIT</scope>
    <scope>PROBABLE SUBCELLULAR LOCATION</scope>
    <scope>MASS SPECTROMETRY</scope>
</reference>
<reference key="3">
    <citation type="journal article" date="2007" name="Biochemistry">
        <title>Functional characterization of monomeric photosystem II core preparations from Thermosynechococcus elongatus with or without the Psb27 protein.</title>
        <authorList>
            <person name="Mamedov F."/>
            <person name="Nowaczyk M.M."/>
            <person name="Thapper A."/>
            <person name="Rogner M."/>
            <person name="Styring S."/>
        </authorList>
    </citation>
    <scope>CHARACTERIZATION OF PARTIALLY ASSEMBLED PSII</scope>
</reference>
<reference key="4">
    <citation type="journal article" date="2012" name="Photosyn. Res.">
        <title>Crystal structure of the Psb27 assembly factor at 1.6 A: implications for binding to Photosystem II.</title>
        <authorList>
            <person name="Michoux F."/>
            <person name="Takasaka K."/>
            <person name="Boehm M."/>
            <person name="Komenda J."/>
            <person name="Nixon P.J."/>
            <person name="Murray J.W."/>
        </authorList>
    </citation>
    <scope>X-RAY CRYSTALLOGRAPHY (1.60 ANGSTROMS) OF 24-134</scope>
    <source>
        <strain>NIES-2133 / IAM M-273 / BP-1</strain>
    </source>
</reference>
<reference evidence="7" key="5">
    <citation type="journal article" date="2021" name="Nat. Plants">
        <title>Structural insights into photosystem II assembly.</title>
        <authorList>
            <person name="Zabret J."/>
            <person name="Bohn S."/>
            <person name="Schuller S.K."/>
            <person name="Arnolds O."/>
            <person name="Moller M."/>
            <person name="Meier-Credo J."/>
            <person name="Liauw P."/>
            <person name="Chan A."/>
            <person name="Tajkhorshid E."/>
            <person name="Langer J.D."/>
            <person name="Stoll R."/>
            <person name="Krieger-Liszkay A."/>
            <person name="Engel B.D."/>
            <person name="Rudack T."/>
            <person name="Schuller J.M."/>
            <person name="Nowaczyk M.M."/>
        </authorList>
    </citation>
    <scope>STRUCTURE BY ELECTRON MICROSCOPY (2.68 ANGSTROMS) IN PSII-I ASSEMBLY COMPLEX</scope>
    <scope>FUNCTION</scope>
    <scope>SUBUNIT</scope>
    <scope>SUBCELLULAR LOCATION</scope>
    <scope>TOPOLOGY</scope>
    <source>
        <strain>NIES-2133 / IAM M-273 / BP-1</strain>
    </source>
</reference>
<gene>
    <name evidence="1" type="primary">psb27</name>
    <name type="ordered locus">tll2464</name>
</gene>